<organism>
    <name type="scientific">Chloranthus spicatus</name>
    <name type="common">Chulantree</name>
    <name type="synonym">Nigrina spicata</name>
    <dbReference type="NCBI Taxonomy" id="13006"/>
    <lineage>
        <taxon>Eukaryota</taxon>
        <taxon>Viridiplantae</taxon>
        <taxon>Streptophyta</taxon>
        <taxon>Embryophyta</taxon>
        <taxon>Tracheophyta</taxon>
        <taxon>Spermatophyta</taxon>
        <taxon>Magnoliopsida</taxon>
        <taxon>Chloranthales</taxon>
        <taxon>Chloranthaceae</taxon>
        <taxon>Chloranthus</taxon>
    </lineage>
</organism>
<comment type="function">
    <text evidence="1">One of the components of the core complex of photosystem II (PSII). PSII is a light-driven water:plastoquinone oxidoreductase that uses light energy to abstract electrons from H(2)O, generating O(2) and a proton gradient subsequently used for ATP formation. It consists of a core antenna complex that captures photons, and an electron transfer chain that converts photonic excitation into a charge separation. This subunit is found at the monomer-monomer interface and is required for correct PSII assembly and/or dimerization.</text>
</comment>
<comment type="subunit">
    <text evidence="1">PSII is composed of 1 copy each of membrane proteins PsbA, PsbB, PsbC, PsbD, PsbE, PsbF, PsbH, PsbI, PsbJ, PsbK, PsbL, PsbM, PsbT, PsbX, PsbY, PsbZ, Psb30/Ycf12, at least 3 peripheral proteins of the oxygen-evolving complex and a large number of cofactors. It forms dimeric complexes.</text>
</comment>
<comment type="subcellular location">
    <subcellularLocation>
        <location evidence="1">Plastid</location>
        <location evidence="1">Chloroplast thylakoid membrane</location>
        <topology evidence="1">Single-pass membrane protein</topology>
    </subcellularLocation>
</comment>
<comment type="similarity">
    <text evidence="1">Belongs to the PsbL family.</text>
</comment>
<evidence type="ECO:0000255" key="1">
    <source>
        <dbReference type="HAMAP-Rule" id="MF_01317"/>
    </source>
</evidence>
<sequence length="38" mass="4497">MTQSNPNEQNVELNRTSLYWGLLLIFVLAVLFSNYFFN</sequence>
<reference key="1">
    <citation type="journal article" date="2007" name="Mol. Phylogenet. Evol.">
        <title>Phylogenetic and evolutionary implications of complete chloroplast genome sequences of four early-diverging angiosperms: Buxus (Buxaceae), Chloranthus (Chloranthaceae), Dioscorea (Dioscoreaceae), and Illicium (Schisandraceae).</title>
        <authorList>
            <person name="Hansen D.R."/>
            <person name="Dastidar S.G."/>
            <person name="Cai Z."/>
            <person name="Penaflor C."/>
            <person name="Kuehl J.V."/>
            <person name="Boore J.L."/>
            <person name="Jansen R.K."/>
        </authorList>
    </citation>
    <scope>NUCLEOTIDE SEQUENCE [LARGE SCALE GENOMIC DNA]</scope>
</reference>
<protein>
    <recommendedName>
        <fullName evidence="1">Photosystem II reaction center protein L</fullName>
        <shortName evidence="1">PSII-L</shortName>
    </recommendedName>
</protein>
<proteinExistence type="inferred from homology"/>
<feature type="chain" id="PRO_0000306226" description="Photosystem II reaction center protein L">
    <location>
        <begin position="1"/>
        <end position="38"/>
    </location>
</feature>
<feature type="transmembrane region" description="Helical" evidence="1">
    <location>
        <begin position="17"/>
        <end position="37"/>
    </location>
</feature>
<keyword id="KW-0150">Chloroplast</keyword>
<keyword id="KW-0472">Membrane</keyword>
<keyword id="KW-0602">Photosynthesis</keyword>
<keyword id="KW-0604">Photosystem II</keyword>
<keyword id="KW-0934">Plastid</keyword>
<keyword id="KW-0674">Reaction center</keyword>
<keyword id="KW-0793">Thylakoid</keyword>
<keyword id="KW-0812">Transmembrane</keyword>
<keyword id="KW-1133">Transmembrane helix</keyword>
<gene>
    <name evidence="1" type="primary">psbL</name>
</gene>
<geneLocation type="chloroplast"/>
<name>PSBL_CHLSC</name>
<accession>A6MMD7</accession>
<dbReference type="EMBL" id="EF380352">
    <property type="protein sequence ID" value="ABQ43275.1"/>
    <property type="molecule type" value="Genomic_DNA"/>
</dbReference>
<dbReference type="RefSeq" id="YP_001294113.1">
    <property type="nucleotide sequence ID" value="NC_009598.1"/>
</dbReference>
<dbReference type="SMR" id="A6MMD7"/>
<dbReference type="GeneID" id="5236552"/>
<dbReference type="GO" id="GO:0009535">
    <property type="term" value="C:chloroplast thylakoid membrane"/>
    <property type="evidence" value="ECO:0007669"/>
    <property type="project" value="UniProtKB-SubCell"/>
</dbReference>
<dbReference type="GO" id="GO:0009539">
    <property type="term" value="C:photosystem II reaction center"/>
    <property type="evidence" value="ECO:0007669"/>
    <property type="project" value="InterPro"/>
</dbReference>
<dbReference type="GO" id="GO:0015979">
    <property type="term" value="P:photosynthesis"/>
    <property type="evidence" value="ECO:0007669"/>
    <property type="project" value="UniProtKB-UniRule"/>
</dbReference>
<dbReference type="HAMAP" id="MF_01317">
    <property type="entry name" value="PSII_PsbL"/>
    <property type="match status" value="1"/>
</dbReference>
<dbReference type="InterPro" id="IPR003372">
    <property type="entry name" value="PSII_PsbL"/>
</dbReference>
<dbReference type="InterPro" id="IPR037266">
    <property type="entry name" value="PSII_PsbL_sf"/>
</dbReference>
<dbReference type="NCBIfam" id="NF001972">
    <property type="entry name" value="PRK00753.1"/>
    <property type="match status" value="1"/>
</dbReference>
<dbReference type="Pfam" id="PF02419">
    <property type="entry name" value="PsbL"/>
    <property type="match status" value="1"/>
</dbReference>
<dbReference type="SUPFAM" id="SSF161017">
    <property type="entry name" value="Photosystem II reaction center protein L, PsbL"/>
    <property type="match status" value="1"/>
</dbReference>